<name>GLMU_NEIGO</name>
<organism>
    <name type="scientific">Neisseria gonorrhoeae</name>
    <dbReference type="NCBI Taxonomy" id="485"/>
    <lineage>
        <taxon>Bacteria</taxon>
        <taxon>Pseudomonadati</taxon>
        <taxon>Pseudomonadota</taxon>
        <taxon>Betaproteobacteria</taxon>
        <taxon>Neisseriales</taxon>
        <taxon>Neisseriaceae</taxon>
        <taxon>Neisseria</taxon>
    </lineage>
</organism>
<dbReference type="EC" id="2.7.7.23" evidence="1"/>
<dbReference type="EC" id="2.3.1.157" evidence="1"/>
<dbReference type="EMBL" id="Z50023">
    <property type="protein sequence ID" value="CAA90326.1"/>
    <property type="molecule type" value="Genomic_DNA"/>
</dbReference>
<dbReference type="SMR" id="Q50986"/>
<dbReference type="BRENDA" id="2.7.7.23">
    <property type="organism ID" value="3590"/>
</dbReference>
<dbReference type="UniPathway" id="UPA00113">
    <property type="reaction ID" value="UER00532"/>
</dbReference>
<dbReference type="UniPathway" id="UPA00113">
    <property type="reaction ID" value="UER00533"/>
</dbReference>
<dbReference type="UniPathway" id="UPA00973"/>
<dbReference type="GO" id="GO:0005737">
    <property type="term" value="C:cytoplasm"/>
    <property type="evidence" value="ECO:0007669"/>
    <property type="project" value="UniProtKB-SubCell"/>
</dbReference>
<dbReference type="GO" id="GO:0016020">
    <property type="term" value="C:membrane"/>
    <property type="evidence" value="ECO:0007669"/>
    <property type="project" value="GOC"/>
</dbReference>
<dbReference type="GO" id="GO:0019134">
    <property type="term" value="F:glucosamine-1-phosphate N-acetyltransferase activity"/>
    <property type="evidence" value="ECO:0007669"/>
    <property type="project" value="UniProtKB-UniRule"/>
</dbReference>
<dbReference type="GO" id="GO:0000287">
    <property type="term" value="F:magnesium ion binding"/>
    <property type="evidence" value="ECO:0007669"/>
    <property type="project" value="UniProtKB-UniRule"/>
</dbReference>
<dbReference type="GO" id="GO:0003977">
    <property type="term" value="F:UDP-N-acetylglucosamine diphosphorylase activity"/>
    <property type="evidence" value="ECO:0007669"/>
    <property type="project" value="UniProtKB-UniRule"/>
</dbReference>
<dbReference type="GO" id="GO:0000902">
    <property type="term" value="P:cell morphogenesis"/>
    <property type="evidence" value="ECO:0007669"/>
    <property type="project" value="UniProtKB-UniRule"/>
</dbReference>
<dbReference type="GO" id="GO:0071555">
    <property type="term" value="P:cell wall organization"/>
    <property type="evidence" value="ECO:0007669"/>
    <property type="project" value="UniProtKB-KW"/>
</dbReference>
<dbReference type="GO" id="GO:0009245">
    <property type="term" value="P:lipid A biosynthetic process"/>
    <property type="evidence" value="ECO:0007669"/>
    <property type="project" value="UniProtKB-UniRule"/>
</dbReference>
<dbReference type="GO" id="GO:0009252">
    <property type="term" value="P:peptidoglycan biosynthetic process"/>
    <property type="evidence" value="ECO:0007669"/>
    <property type="project" value="UniProtKB-UniRule"/>
</dbReference>
<dbReference type="GO" id="GO:0008360">
    <property type="term" value="P:regulation of cell shape"/>
    <property type="evidence" value="ECO:0007669"/>
    <property type="project" value="UniProtKB-KW"/>
</dbReference>
<dbReference type="GO" id="GO:0006048">
    <property type="term" value="P:UDP-N-acetylglucosamine biosynthetic process"/>
    <property type="evidence" value="ECO:0007669"/>
    <property type="project" value="UniProtKB-UniPathway"/>
</dbReference>
<dbReference type="CDD" id="cd02540">
    <property type="entry name" value="GT2_GlmU_N_bac"/>
    <property type="match status" value="1"/>
</dbReference>
<dbReference type="CDD" id="cd03353">
    <property type="entry name" value="LbH_GlmU_C"/>
    <property type="match status" value="1"/>
</dbReference>
<dbReference type="Gene3D" id="2.160.10.10">
    <property type="entry name" value="Hexapeptide repeat proteins"/>
    <property type="match status" value="1"/>
</dbReference>
<dbReference type="Gene3D" id="3.90.550.10">
    <property type="entry name" value="Spore Coat Polysaccharide Biosynthesis Protein SpsA, Chain A"/>
    <property type="match status" value="1"/>
</dbReference>
<dbReference type="HAMAP" id="MF_01631">
    <property type="entry name" value="GlmU"/>
    <property type="match status" value="1"/>
</dbReference>
<dbReference type="InterPro" id="IPR005882">
    <property type="entry name" value="Bifunctional_GlmU"/>
</dbReference>
<dbReference type="InterPro" id="IPR050065">
    <property type="entry name" value="GlmU-like"/>
</dbReference>
<dbReference type="InterPro" id="IPR038009">
    <property type="entry name" value="GlmU_C_LbH"/>
</dbReference>
<dbReference type="InterPro" id="IPR001451">
    <property type="entry name" value="Hexapep"/>
</dbReference>
<dbReference type="InterPro" id="IPR025877">
    <property type="entry name" value="MobA-like_NTP_Trfase"/>
</dbReference>
<dbReference type="InterPro" id="IPR029044">
    <property type="entry name" value="Nucleotide-diphossugar_trans"/>
</dbReference>
<dbReference type="InterPro" id="IPR011004">
    <property type="entry name" value="Trimer_LpxA-like_sf"/>
</dbReference>
<dbReference type="NCBIfam" id="TIGR01173">
    <property type="entry name" value="glmU"/>
    <property type="match status" value="1"/>
</dbReference>
<dbReference type="PANTHER" id="PTHR43584:SF3">
    <property type="entry name" value="BIFUNCTIONAL PROTEIN GLMU"/>
    <property type="match status" value="1"/>
</dbReference>
<dbReference type="PANTHER" id="PTHR43584">
    <property type="entry name" value="NUCLEOTIDYL TRANSFERASE"/>
    <property type="match status" value="1"/>
</dbReference>
<dbReference type="Pfam" id="PF00132">
    <property type="entry name" value="Hexapep"/>
    <property type="match status" value="3"/>
</dbReference>
<dbReference type="Pfam" id="PF12804">
    <property type="entry name" value="NTP_transf_3"/>
    <property type="match status" value="1"/>
</dbReference>
<dbReference type="SUPFAM" id="SSF53448">
    <property type="entry name" value="Nucleotide-diphospho-sugar transferases"/>
    <property type="match status" value="1"/>
</dbReference>
<dbReference type="SUPFAM" id="SSF51161">
    <property type="entry name" value="Trimeric LpxA-like enzymes"/>
    <property type="match status" value="1"/>
</dbReference>
<evidence type="ECO:0000255" key="1">
    <source>
        <dbReference type="HAMAP-Rule" id="MF_01631"/>
    </source>
</evidence>
<gene>
    <name evidence="1" type="primary">glmU</name>
</gene>
<reference key="1">
    <citation type="journal article" date="1995" name="J. Bacteriol.">
        <title>Identification of the gonococcal glmU gene encoding the enzyme N-acetylglucosamine 1-phosphate uridyltransferase involved in the synthesis of UDP-GlcNAc.</title>
        <authorList>
            <person name="Ullrich J."/>
            <person name="van Putten J.P.M."/>
        </authorList>
    </citation>
    <scope>NUCLEOTIDE SEQUENCE [GENOMIC DNA]</scope>
    <source>
        <strain>MS11</strain>
    </source>
</reference>
<feature type="chain" id="PRO_0000068704" description="Bifunctional protein GlmU">
    <location>
        <begin position="1"/>
        <end position="456"/>
    </location>
</feature>
<feature type="region of interest" description="Pyrophosphorylase" evidence="1">
    <location>
        <begin position="1"/>
        <end position="228"/>
    </location>
</feature>
<feature type="region of interest" description="Linker" evidence="1">
    <location>
        <begin position="229"/>
        <end position="249"/>
    </location>
</feature>
<feature type="region of interest" description="N-acetyltransferase" evidence="1">
    <location>
        <begin position="250"/>
        <end position="456"/>
    </location>
</feature>
<feature type="active site" description="Proton acceptor" evidence="1">
    <location>
        <position position="362"/>
    </location>
</feature>
<feature type="binding site" evidence="1">
    <location>
        <begin position="11"/>
        <end position="14"/>
    </location>
    <ligand>
        <name>UDP-N-acetyl-alpha-D-glucosamine</name>
        <dbReference type="ChEBI" id="CHEBI:57705"/>
    </ligand>
</feature>
<feature type="binding site" evidence="1">
    <location>
        <position position="25"/>
    </location>
    <ligand>
        <name>UDP-N-acetyl-alpha-D-glucosamine</name>
        <dbReference type="ChEBI" id="CHEBI:57705"/>
    </ligand>
</feature>
<feature type="binding site" evidence="1">
    <location>
        <position position="75"/>
    </location>
    <ligand>
        <name>UDP-N-acetyl-alpha-D-glucosamine</name>
        <dbReference type="ChEBI" id="CHEBI:57705"/>
    </ligand>
</feature>
<feature type="binding site" evidence="1">
    <location>
        <begin position="80"/>
        <end position="81"/>
    </location>
    <ligand>
        <name>UDP-N-acetyl-alpha-D-glucosamine</name>
        <dbReference type="ChEBI" id="CHEBI:57705"/>
    </ligand>
</feature>
<feature type="binding site" evidence="1">
    <location>
        <begin position="102"/>
        <end position="104"/>
    </location>
    <ligand>
        <name>UDP-N-acetyl-alpha-D-glucosamine</name>
        <dbReference type="ChEBI" id="CHEBI:57705"/>
    </ligand>
</feature>
<feature type="binding site" evidence="1">
    <location>
        <position position="104"/>
    </location>
    <ligand>
        <name>Mg(2+)</name>
        <dbReference type="ChEBI" id="CHEBI:18420"/>
    </ligand>
</feature>
<feature type="binding site" evidence="1">
    <location>
        <position position="138"/>
    </location>
    <ligand>
        <name>UDP-N-acetyl-alpha-D-glucosamine</name>
        <dbReference type="ChEBI" id="CHEBI:57705"/>
    </ligand>
</feature>
<feature type="binding site" evidence="1">
    <location>
        <position position="153"/>
    </location>
    <ligand>
        <name>UDP-N-acetyl-alpha-D-glucosamine</name>
        <dbReference type="ChEBI" id="CHEBI:57705"/>
    </ligand>
</feature>
<feature type="binding site" evidence="1">
    <location>
        <position position="168"/>
    </location>
    <ligand>
        <name>UDP-N-acetyl-alpha-D-glucosamine</name>
        <dbReference type="ChEBI" id="CHEBI:57705"/>
    </ligand>
</feature>
<feature type="binding site" evidence="1">
    <location>
        <position position="226"/>
    </location>
    <ligand>
        <name>Mg(2+)</name>
        <dbReference type="ChEBI" id="CHEBI:18420"/>
    </ligand>
</feature>
<feature type="binding site" evidence="1">
    <location>
        <position position="226"/>
    </location>
    <ligand>
        <name>UDP-N-acetyl-alpha-D-glucosamine</name>
        <dbReference type="ChEBI" id="CHEBI:57705"/>
    </ligand>
</feature>
<feature type="binding site" evidence="1">
    <location>
        <position position="332"/>
    </location>
    <ligand>
        <name>UDP-N-acetyl-alpha-D-glucosamine</name>
        <dbReference type="ChEBI" id="CHEBI:57705"/>
    </ligand>
</feature>
<feature type="binding site" evidence="1">
    <location>
        <position position="350"/>
    </location>
    <ligand>
        <name>UDP-N-acetyl-alpha-D-glucosamine</name>
        <dbReference type="ChEBI" id="CHEBI:57705"/>
    </ligand>
</feature>
<feature type="binding site" evidence="1">
    <location>
        <position position="365"/>
    </location>
    <ligand>
        <name>UDP-N-acetyl-alpha-D-glucosamine</name>
        <dbReference type="ChEBI" id="CHEBI:57705"/>
    </ligand>
</feature>
<feature type="binding site" evidence="1">
    <location>
        <position position="376"/>
    </location>
    <ligand>
        <name>UDP-N-acetyl-alpha-D-glucosamine</name>
        <dbReference type="ChEBI" id="CHEBI:57705"/>
    </ligand>
</feature>
<feature type="binding site" evidence="1">
    <location>
        <position position="379"/>
    </location>
    <ligand>
        <name>acetyl-CoA</name>
        <dbReference type="ChEBI" id="CHEBI:57288"/>
    </ligand>
</feature>
<feature type="binding site" evidence="1">
    <location>
        <begin position="385"/>
        <end position="386"/>
    </location>
    <ligand>
        <name>acetyl-CoA</name>
        <dbReference type="ChEBI" id="CHEBI:57288"/>
    </ligand>
</feature>
<feature type="binding site" evidence="1">
    <location>
        <position position="404"/>
    </location>
    <ligand>
        <name>acetyl-CoA</name>
        <dbReference type="ChEBI" id="CHEBI:57288"/>
    </ligand>
</feature>
<feature type="binding site" evidence="1">
    <location>
        <position position="422"/>
    </location>
    <ligand>
        <name>acetyl-CoA</name>
        <dbReference type="ChEBI" id="CHEBI:57288"/>
    </ligand>
</feature>
<feature type="binding site" evidence="1">
    <location>
        <position position="439"/>
    </location>
    <ligand>
        <name>acetyl-CoA</name>
        <dbReference type="ChEBI" id="CHEBI:57288"/>
    </ligand>
</feature>
<comment type="function">
    <text evidence="1">Catalyzes the last two sequential reactions in the de novo biosynthetic pathway for UDP-N-acetylglucosamine (UDP-GlcNAc). The C-terminal domain catalyzes the transfer of acetyl group from acetyl coenzyme A to glucosamine-1-phosphate (GlcN-1-P) to produce N-acetylglucosamine-1-phosphate (GlcNAc-1-P), which is converted into UDP-GlcNAc by the transfer of uridine 5-monophosphate (from uridine 5-triphosphate), a reaction catalyzed by the N-terminal domain.</text>
</comment>
<comment type="catalytic activity">
    <reaction evidence="1">
        <text>alpha-D-glucosamine 1-phosphate + acetyl-CoA = N-acetyl-alpha-D-glucosamine 1-phosphate + CoA + H(+)</text>
        <dbReference type="Rhea" id="RHEA:13725"/>
        <dbReference type="ChEBI" id="CHEBI:15378"/>
        <dbReference type="ChEBI" id="CHEBI:57287"/>
        <dbReference type="ChEBI" id="CHEBI:57288"/>
        <dbReference type="ChEBI" id="CHEBI:57776"/>
        <dbReference type="ChEBI" id="CHEBI:58516"/>
        <dbReference type="EC" id="2.3.1.157"/>
    </reaction>
</comment>
<comment type="catalytic activity">
    <reaction evidence="1">
        <text>N-acetyl-alpha-D-glucosamine 1-phosphate + UTP + H(+) = UDP-N-acetyl-alpha-D-glucosamine + diphosphate</text>
        <dbReference type="Rhea" id="RHEA:13509"/>
        <dbReference type="ChEBI" id="CHEBI:15378"/>
        <dbReference type="ChEBI" id="CHEBI:33019"/>
        <dbReference type="ChEBI" id="CHEBI:46398"/>
        <dbReference type="ChEBI" id="CHEBI:57705"/>
        <dbReference type="ChEBI" id="CHEBI:57776"/>
        <dbReference type="EC" id="2.7.7.23"/>
    </reaction>
</comment>
<comment type="cofactor">
    <cofactor evidence="1">
        <name>Mg(2+)</name>
        <dbReference type="ChEBI" id="CHEBI:18420"/>
    </cofactor>
    <text evidence="1">Binds 1 Mg(2+) ion per subunit.</text>
</comment>
<comment type="pathway">
    <text evidence="1">Nucleotide-sugar biosynthesis; UDP-N-acetyl-alpha-D-glucosamine biosynthesis; N-acetyl-alpha-D-glucosamine 1-phosphate from alpha-D-glucosamine 6-phosphate (route II): step 2/2.</text>
</comment>
<comment type="pathway">
    <text evidence="1">Nucleotide-sugar biosynthesis; UDP-N-acetyl-alpha-D-glucosamine biosynthesis; UDP-N-acetyl-alpha-D-glucosamine from N-acetyl-alpha-D-glucosamine 1-phosphate: step 1/1.</text>
</comment>
<comment type="pathway">
    <text evidence="1">Bacterial outer membrane biogenesis; LPS lipid A biosynthesis.</text>
</comment>
<comment type="subunit">
    <text evidence="1">Homotrimer.</text>
</comment>
<comment type="subcellular location">
    <subcellularLocation>
        <location evidence="1">Cytoplasm</location>
    </subcellularLocation>
</comment>
<comment type="similarity">
    <text evidence="1">In the N-terminal section; belongs to the N-acetylglucosamine-1-phosphate uridyltransferase family.</text>
</comment>
<comment type="similarity">
    <text evidence="1">In the C-terminal section; belongs to the transferase hexapeptide repeat family.</text>
</comment>
<keyword id="KW-0012">Acyltransferase</keyword>
<keyword id="KW-0133">Cell shape</keyword>
<keyword id="KW-0961">Cell wall biogenesis/degradation</keyword>
<keyword id="KW-0963">Cytoplasm</keyword>
<keyword id="KW-0460">Magnesium</keyword>
<keyword id="KW-0479">Metal-binding</keyword>
<keyword id="KW-0511">Multifunctional enzyme</keyword>
<keyword id="KW-0548">Nucleotidyltransferase</keyword>
<keyword id="KW-0573">Peptidoglycan synthesis</keyword>
<keyword id="KW-0677">Repeat</keyword>
<keyword id="KW-0808">Transferase</keyword>
<sequence>MPQNTLNTVILAAGKGTRMYSQMPKVLHCIGGKPMVERVIDTAAALNPQNICVVVGHGKEQVLDTVKRDAVWVEQTEQLGTGHAVKTALPHLASEGRTLVLYGDVPLIDVETLETLLEAAGNEVGLLTDVPADPAGLGRIIRDGSGSVTAIVEEKDASATQKTIREINTGILVLPNAKLENWLNSLSSNNAQGEYYLTDLIAKAVADGIKVRPVRVRASHLAAGVNNKRQLAELERIFQTEQAQELLKAGVTLRDPARFDLRGRLKHGQDVVIDVNVVIEGEVELGDNVEIGANCVIKNAKIGANSKIAPFSHLEGCEVGENNRIGPYARLRPQARLADDVHVGNFVEIKNAAIGKGTKANHLTYIGDAEVGSKTNFGAGTIIANYDGVHKHKTVIGDEVRIGSNCVLVAPVTLGNKVTTGAGSAITRNIEDNKLALARARQTVIEGWVRPEKNKQ</sequence>
<proteinExistence type="inferred from homology"/>
<protein>
    <recommendedName>
        <fullName evidence="1">Bifunctional protein GlmU</fullName>
    </recommendedName>
    <domain>
        <recommendedName>
            <fullName evidence="1">UDP-N-acetylglucosamine pyrophosphorylase</fullName>
            <ecNumber evidence="1">2.7.7.23</ecNumber>
        </recommendedName>
        <alternativeName>
            <fullName evidence="1">N-acetylglucosamine-1-phosphate uridyltransferase</fullName>
        </alternativeName>
    </domain>
    <domain>
        <recommendedName>
            <fullName evidence="1">Glucosamine-1-phosphate N-acetyltransferase</fullName>
            <ecNumber evidence="1">2.3.1.157</ecNumber>
        </recommendedName>
    </domain>
</protein>
<accession>Q50986</accession>